<protein>
    <recommendedName>
        <fullName evidence="1">Dihydroorotate dehydrogenase (quinone)</fullName>
        <ecNumber evidence="1">1.3.5.2</ecNumber>
    </recommendedName>
    <alternativeName>
        <fullName evidence="1">DHOdehase</fullName>
        <shortName evidence="1">DHOD</shortName>
        <shortName evidence="1">DHODase</shortName>
    </alternativeName>
    <alternativeName>
        <fullName evidence="1">Dihydroorotate oxidase</fullName>
    </alternativeName>
</protein>
<organism>
    <name type="scientific">Helicobacter acinonychis (strain Sheeba)</name>
    <dbReference type="NCBI Taxonomy" id="382638"/>
    <lineage>
        <taxon>Bacteria</taxon>
        <taxon>Pseudomonadati</taxon>
        <taxon>Campylobacterota</taxon>
        <taxon>Epsilonproteobacteria</taxon>
        <taxon>Campylobacterales</taxon>
        <taxon>Helicobacteraceae</taxon>
        <taxon>Helicobacter</taxon>
    </lineage>
</organism>
<keyword id="KW-1003">Cell membrane</keyword>
<keyword id="KW-0285">Flavoprotein</keyword>
<keyword id="KW-0288">FMN</keyword>
<keyword id="KW-0472">Membrane</keyword>
<keyword id="KW-0560">Oxidoreductase</keyword>
<keyword id="KW-0665">Pyrimidine biosynthesis</keyword>
<sequence>MLYSLFKKYLFRLDAEEVHEKVCKILKILSRSPFFCNLIHAQFGYTNPKLENEILGLHFPNPLGLAAGFDKNASMIRALTAFGFGYLEAGTLTNTAQSGNEKPRLFRHIEEESLQNAMGFNNYGAVLGVRAFERFAPYKTPIGINLGKNKHIEQDNALEDYKAVLIKCLNIGDYYTFNLSSPNTPNLRDLQNKAFVSELFCMAKEMTKKPLFLKIAPDLEIDAMLEITNSAIEAGANGIIATNTTIDKSLVFAPKETGGLSGKCLTQKSREIFKELAKAFFNKTILVSVGGISDAKEAYERIKMGASLLQIYSAFIYNGPNLCQNILKDLVKLLQKDGFLSVKEVIGADLR</sequence>
<comment type="function">
    <text evidence="1">Catalyzes the conversion of dihydroorotate to orotate with quinone as electron acceptor.</text>
</comment>
<comment type="catalytic activity">
    <reaction evidence="1">
        <text>(S)-dihydroorotate + a quinone = orotate + a quinol</text>
        <dbReference type="Rhea" id="RHEA:30187"/>
        <dbReference type="ChEBI" id="CHEBI:24646"/>
        <dbReference type="ChEBI" id="CHEBI:30839"/>
        <dbReference type="ChEBI" id="CHEBI:30864"/>
        <dbReference type="ChEBI" id="CHEBI:132124"/>
        <dbReference type="EC" id="1.3.5.2"/>
    </reaction>
</comment>
<comment type="cofactor">
    <cofactor evidence="1">
        <name>FMN</name>
        <dbReference type="ChEBI" id="CHEBI:58210"/>
    </cofactor>
    <text evidence="1">Binds 1 FMN per subunit.</text>
</comment>
<comment type="pathway">
    <text evidence="1">Pyrimidine metabolism; UMP biosynthesis via de novo pathway; orotate from (S)-dihydroorotate (quinone route): step 1/1.</text>
</comment>
<comment type="subunit">
    <text evidence="1">Monomer.</text>
</comment>
<comment type="subcellular location">
    <subcellularLocation>
        <location evidence="1">Cell membrane</location>
        <topology evidence="1">Peripheral membrane protein</topology>
    </subcellularLocation>
</comment>
<comment type="similarity">
    <text evidence="1">Belongs to the dihydroorotate dehydrogenase family. Type 2 subfamily.</text>
</comment>
<evidence type="ECO:0000255" key="1">
    <source>
        <dbReference type="HAMAP-Rule" id="MF_00225"/>
    </source>
</evidence>
<gene>
    <name evidence="1" type="primary">pyrD</name>
    <name type="ordered locus">Hac_1115</name>
</gene>
<reference key="1">
    <citation type="journal article" date="2006" name="PLoS Genet.">
        <title>Who ate whom? Adaptive Helicobacter genomic changes that accompanied a host jump from early humans to large felines.</title>
        <authorList>
            <person name="Eppinger M."/>
            <person name="Baar C."/>
            <person name="Linz B."/>
            <person name="Raddatz G."/>
            <person name="Lanz C."/>
            <person name="Keller H."/>
            <person name="Morelli G."/>
            <person name="Gressmann H."/>
            <person name="Achtman M."/>
            <person name="Schuster S.C."/>
        </authorList>
    </citation>
    <scope>NUCLEOTIDE SEQUENCE [LARGE SCALE GENOMIC DNA]</scope>
    <source>
        <strain>Sheeba</strain>
    </source>
</reference>
<accession>Q17WU9</accession>
<proteinExistence type="inferred from homology"/>
<name>PYRD_HELAH</name>
<dbReference type="EC" id="1.3.5.2" evidence="1"/>
<dbReference type="EMBL" id="AM260522">
    <property type="protein sequence ID" value="CAJ99877.1"/>
    <property type="molecule type" value="Genomic_DNA"/>
</dbReference>
<dbReference type="RefSeq" id="WP_011577984.1">
    <property type="nucleotide sequence ID" value="NC_008229.1"/>
</dbReference>
<dbReference type="SMR" id="Q17WU9"/>
<dbReference type="STRING" id="382638.Hac_1115"/>
<dbReference type="GeneID" id="31758471"/>
<dbReference type="KEGG" id="hac:Hac_1115"/>
<dbReference type="eggNOG" id="COG0167">
    <property type="taxonomic scope" value="Bacteria"/>
</dbReference>
<dbReference type="HOGENOM" id="CLU_013640_2_0_7"/>
<dbReference type="OrthoDB" id="9802377at2"/>
<dbReference type="BioCyc" id="HACI382638:HAC_RS04790-MONOMER"/>
<dbReference type="UniPathway" id="UPA00070">
    <property type="reaction ID" value="UER00946"/>
</dbReference>
<dbReference type="Proteomes" id="UP000000775">
    <property type="component" value="Chromosome"/>
</dbReference>
<dbReference type="GO" id="GO:0005737">
    <property type="term" value="C:cytoplasm"/>
    <property type="evidence" value="ECO:0007669"/>
    <property type="project" value="InterPro"/>
</dbReference>
<dbReference type="GO" id="GO:0005886">
    <property type="term" value="C:plasma membrane"/>
    <property type="evidence" value="ECO:0007669"/>
    <property type="project" value="UniProtKB-SubCell"/>
</dbReference>
<dbReference type="GO" id="GO:0106430">
    <property type="term" value="F:dihydroorotate dehydrogenase (quinone) activity"/>
    <property type="evidence" value="ECO:0007669"/>
    <property type="project" value="UniProtKB-EC"/>
</dbReference>
<dbReference type="GO" id="GO:0006207">
    <property type="term" value="P:'de novo' pyrimidine nucleobase biosynthetic process"/>
    <property type="evidence" value="ECO:0007669"/>
    <property type="project" value="InterPro"/>
</dbReference>
<dbReference type="GO" id="GO:0044205">
    <property type="term" value="P:'de novo' UMP biosynthetic process"/>
    <property type="evidence" value="ECO:0007669"/>
    <property type="project" value="UniProtKB-UniRule"/>
</dbReference>
<dbReference type="CDD" id="cd04738">
    <property type="entry name" value="DHOD_2_like"/>
    <property type="match status" value="1"/>
</dbReference>
<dbReference type="Gene3D" id="3.20.20.70">
    <property type="entry name" value="Aldolase class I"/>
    <property type="match status" value="1"/>
</dbReference>
<dbReference type="HAMAP" id="MF_00225">
    <property type="entry name" value="DHO_dh_type2"/>
    <property type="match status" value="1"/>
</dbReference>
<dbReference type="InterPro" id="IPR013785">
    <property type="entry name" value="Aldolase_TIM"/>
</dbReference>
<dbReference type="InterPro" id="IPR050074">
    <property type="entry name" value="DHO_dehydrogenase"/>
</dbReference>
<dbReference type="InterPro" id="IPR012135">
    <property type="entry name" value="Dihydroorotate_DH_1_2"/>
</dbReference>
<dbReference type="InterPro" id="IPR005719">
    <property type="entry name" value="Dihydroorotate_DH_2"/>
</dbReference>
<dbReference type="InterPro" id="IPR005720">
    <property type="entry name" value="Dihydroorotate_DH_cat"/>
</dbReference>
<dbReference type="InterPro" id="IPR001295">
    <property type="entry name" value="Dihydroorotate_DH_CS"/>
</dbReference>
<dbReference type="NCBIfam" id="NF003649">
    <property type="entry name" value="PRK05286.2-2"/>
    <property type="match status" value="1"/>
</dbReference>
<dbReference type="NCBIfam" id="NF003652">
    <property type="entry name" value="PRK05286.2-5"/>
    <property type="match status" value="1"/>
</dbReference>
<dbReference type="NCBIfam" id="TIGR01036">
    <property type="entry name" value="pyrD_sub2"/>
    <property type="match status" value="1"/>
</dbReference>
<dbReference type="PANTHER" id="PTHR48109:SF4">
    <property type="entry name" value="DIHYDROOROTATE DEHYDROGENASE (QUINONE), MITOCHONDRIAL"/>
    <property type="match status" value="1"/>
</dbReference>
<dbReference type="PANTHER" id="PTHR48109">
    <property type="entry name" value="DIHYDROOROTATE DEHYDROGENASE (QUINONE), MITOCHONDRIAL-RELATED"/>
    <property type="match status" value="1"/>
</dbReference>
<dbReference type="Pfam" id="PF01180">
    <property type="entry name" value="DHO_dh"/>
    <property type="match status" value="1"/>
</dbReference>
<dbReference type="PIRSF" id="PIRSF000164">
    <property type="entry name" value="DHO_oxidase"/>
    <property type="match status" value="1"/>
</dbReference>
<dbReference type="SUPFAM" id="SSF51395">
    <property type="entry name" value="FMN-linked oxidoreductases"/>
    <property type="match status" value="1"/>
</dbReference>
<dbReference type="PROSITE" id="PS00911">
    <property type="entry name" value="DHODEHASE_1"/>
    <property type="match status" value="1"/>
</dbReference>
<dbReference type="PROSITE" id="PS00912">
    <property type="entry name" value="DHODEHASE_2"/>
    <property type="match status" value="1"/>
</dbReference>
<feature type="chain" id="PRO_1000024178" description="Dihydroorotate dehydrogenase (quinone)">
    <location>
        <begin position="1"/>
        <end position="351"/>
    </location>
</feature>
<feature type="active site" description="Nucleophile" evidence="1">
    <location>
        <position position="181"/>
    </location>
</feature>
<feature type="binding site" evidence="1">
    <location>
        <begin position="67"/>
        <end position="71"/>
    </location>
    <ligand>
        <name>FMN</name>
        <dbReference type="ChEBI" id="CHEBI:58210"/>
    </ligand>
</feature>
<feature type="binding site" evidence="1">
    <location>
        <position position="71"/>
    </location>
    <ligand>
        <name>substrate</name>
    </ligand>
</feature>
<feature type="binding site" evidence="1">
    <location>
        <position position="91"/>
    </location>
    <ligand>
        <name>FMN</name>
        <dbReference type="ChEBI" id="CHEBI:58210"/>
    </ligand>
</feature>
<feature type="binding site" evidence="1">
    <location>
        <begin position="116"/>
        <end position="120"/>
    </location>
    <ligand>
        <name>substrate</name>
    </ligand>
</feature>
<feature type="binding site" evidence="1">
    <location>
        <position position="145"/>
    </location>
    <ligand>
        <name>FMN</name>
        <dbReference type="ChEBI" id="CHEBI:58210"/>
    </ligand>
</feature>
<feature type="binding site" evidence="1">
    <location>
        <position position="178"/>
    </location>
    <ligand>
        <name>FMN</name>
        <dbReference type="ChEBI" id="CHEBI:58210"/>
    </ligand>
</feature>
<feature type="binding site" evidence="1">
    <location>
        <position position="178"/>
    </location>
    <ligand>
        <name>substrate</name>
    </ligand>
</feature>
<feature type="binding site" evidence="1">
    <location>
        <position position="183"/>
    </location>
    <ligand>
        <name>substrate</name>
    </ligand>
</feature>
<feature type="binding site" evidence="1">
    <location>
        <position position="214"/>
    </location>
    <ligand>
        <name>FMN</name>
        <dbReference type="ChEBI" id="CHEBI:58210"/>
    </ligand>
</feature>
<feature type="binding site" evidence="1">
    <location>
        <position position="242"/>
    </location>
    <ligand>
        <name>FMN</name>
        <dbReference type="ChEBI" id="CHEBI:58210"/>
    </ligand>
</feature>
<feature type="binding site" evidence="1">
    <location>
        <begin position="243"/>
        <end position="244"/>
    </location>
    <ligand>
        <name>substrate</name>
    </ligand>
</feature>
<feature type="binding site" evidence="1">
    <location>
        <position position="262"/>
    </location>
    <ligand>
        <name>FMN</name>
        <dbReference type="ChEBI" id="CHEBI:58210"/>
    </ligand>
</feature>
<feature type="binding site" evidence="1">
    <location>
        <position position="291"/>
    </location>
    <ligand>
        <name>FMN</name>
        <dbReference type="ChEBI" id="CHEBI:58210"/>
    </ligand>
</feature>
<feature type="binding site" evidence="1">
    <location>
        <begin position="312"/>
        <end position="313"/>
    </location>
    <ligand>
        <name>FMN</name>
        <dbReference type="ChEBI" id="CHEBI:58210"/>
    </ligand>
</feature>